<name>GPSB_STRP7</name>
<keyword id="KW-0131">Cell cycle</keyword>
<keyword id="KW-0132">Cell division</keyword>
<keyword id="KW-0133">Cell shape</keyword>
<keyword id="KW-0175">Coiled coil</keyword>
<keyword id="KW-0963">Cytoplasm</keyword>
<dbReference type="EMBL" id="CP000918">
    <property type="protein sequence ID" value="ACO17973.1"/>
    <property type="molecule type" value="Genomic_DNA"/>
</dbReference>
<dbReference type="RefSeq" id="WP_000146522.1">
    <property type="nucleotide sequence ID" value="NC_012468.1"/>
</dbReference>
<dbReference type="SMR" id="C1CBF2"/>
<dbReference type="GeneID" id="45652165"/>
<dbReference type="KEGG" id="snm:SP70585_0443"/>
<dbReference type="HOGENOM" id="CLU_140309_1_0_9"/>
<dbReference type="Proteomes" id="UP000002211">
    <property type="component" value="Chromosome"/>
</dbReference>
<dbReference type="GO" id="GO:0005737">
    <property type="term" value="C:cytoplasm"/>
    <property type="evidence" value="ECO:0007669"/>
    <property type="project" value="UniProtKB-SubCell"/>
</dbReference>
<dbReference type="GO" id="GO:0051301">
    <property type="term" value="P:cell division"/>
    <property type="evidence" value="ECO:0007669"/>
    <property type="project" value="UniProtKB-UniRule"/>
</dbReference>
<dbReference type="GO" id="GO:0008360">
    <property type="term" value="P:regulation of cell shape"/>
    <property type="evidence" value="ECO:0007669"/>
    <property type="project" value="UniProtKB-UniRule"/>
</dbReference>
<dbReference type="Gene3D" id="6.10.250.660">
    <property type="match status" value="1"/>
</dbReference>
<dbReference type="HAMAP" id="MF_02011">
    <property type="entry name" value="GpsB"/>
    <property type="match status" value="1"/>
</dbReference>
<dbReference type="InterPro" id="IPR011229">
    <property type="entry name" value="Cell_cycle_GpsB"/>
</dbReference>
<dbReference type="InterPro" id="IPR019933">
    <property type="entry name" value="DivIVA_domain"/>
</dbReference>
<dbReference type="InterPro" id="IPR007793">
    <property type="entry name" value="DivIVA_fam"/>
</dbReference>
<dbReference type="NCBIfam" id="TIGR03544">
    <property type="entry name" value="DivI1A_domain"/>
    <property type="match status" value="1"/>
</dbReference>
<dbReference type="NCBIfam" id="NF010725">
    <property type="entry name" value="PRK14127.1"/>
    <property type="match status" value="1"/>
</dbReference>
<dbReference type="PANTHER" id="PTHR35794:SF1">
    <property type="entry name" value="CELL CYCLE PROTEIN GPSB"/>
    <property type="match status" value="1"/>
</dbReference>
<dbReference type="PANTHER" id="PTHR35794">
    <property type="entry name" value="CELL DIVISION PROTEIN DIVIVA"/>
    <property type="match status" value="1"/>
</dbReference>
<dbReference type="Pfam" id="PF05103">
    <property type="entry name" value="DivIVA"/>
    <property type="match status" value="1"/>
</dbReference>
<dbReference type="PIRSF" id="PIRSF029938">
    <property type="entry name" value="UCP029938"/>
    <property type="match status" value="1"/>
</dbReference>
<gene>
    <name evidence="1" type="primary">gpsB</name>
    <name type="ordered locus">SP70585_0443</name>
</gene>
<organism>
    <name type="scientific">Streptococcus pneumoniae (strain 70585)</name>
    <dbReference type="NCBI Taxonomy" id="488221"/>
    <lineage>
        <taxon>Bacteria</taxon>
        <taxon>Bacillati</taxon>
        <taxon>Bacillota</taxon>
        <taxon>Bacilli</taxon>
        <taxon>Lactobacillales</taxon>
        <taxon>Streptococcaceae</taxon>
        <taxon>Streptococcus</taxon>
    </lineage>
</organism>
<reference key="1">
    <citation type="journal article" date="2010" name="Genome Biol.">
        <title>Structure and dynamics of the pan-genome of Streptococcus pneumoniae and closely related species.</title>
        <authorList>
            <person name="Donati C."/>
            <person name="Hiller N.L."/>
            <person name="Tettelin H."/>
            <person name="Muzzi A."/>
            <person name="Croucher N.J."/>
            <person name="Angiuoli S.V."/>
            <person name="Oggioni M."/>
            <person name="Dunning Hotopp J.C."/>
            <person name="Hu F.Z."/>
            <person name="Riley D.R."/>
            <person name="Covacci A."/>
            <person name="Mitchell T.J."/>
            <person name="Bentley S.D."/>
            <person name="Kilian M."/>
            <person name="Ehrlich G.D."/>
            <person name="Rappuoli R."/>
            <person name="Moxon E.R."/>
            <person name="Masignani V."/>
        </authorList>
    </citation>
    <scope>NUCLEOTIDE SEQUENCE [LARGE SCALE GENOMIC DNA]</scope>
    <source>
        <strain>70585</strain>
    </source>
</reference>
<proteinExistence type="inferred from homology"/>
<protein>
    <recommendedName>
        <fullName evidence="1">Cell cycle protein GpsB</fullName>
    </recommendedName>
    <alternativeName>
        <fullName evidence="1">Guiding PBP1-shuttling protein</fullName>
    </alternativeName>
</protein>
<evidence type="ECO:0000255" key="1">
    <source>
        <dbReference type="HAMAP-Rule" id="MF_02011"/>
    </source>
</evidence>
<feature type="chain" id="PRO_1000189498" description="Cell cycle protein GpsB">
    <location>
        <begin position="1"/>
        <end position="109"/>
    </location>
</feature>
<feature type="coiled-coil region" evidence="1">
    <location>
        <begin position="36"/>
        <end position="63"/>
    </location>
</feature>
<accession>C1CBF2</accession>
<sequence length="109" mass="12575">MASIIFSAKDIFEQEFGREVRGYNKVEVDEFLDDVIKDYETYAALVKSLRQEIADLKEELTRKPKPSPVQAEPLEAAITSSMTNFDILKRLNRLEKEVFGKQILDNSDF</sequence>
<comment type="function">
    <text evidence="1">Divisome component that associates with the complex late in its assembly, after the Z-ring is formed, and is dependent on DivIC and PBP2B for its recruitment to the divisome. Together with EzrA, is a key component of the system that regulates PBP1 localization during cell cycle progression. Its main role could be the removal of PBP1 from the cell pole after pole maturation is completed. Also contributes to the recruitment of PBP1 to the division complex. Not essential for septum formation.</text>
</comment>
<comment type="subunit">
    <text evidence="1">Forms polymers through the coiled coil domains. Interacts with PBP1, MreC and EzrA.</text>
</comment>
<comment type="subcellular location">
    <subcellularLocation>
        <location evidence="1">Cytoplasm</location>
    </subcellularLocation>
    <text evidence="1">Shuttles between the lateral wall and the division site in a cell cycle-dependent manner.</text>
</comment>
<comment type="similarity">
    <text evidence="1">Belongs to the GpsB family.</text>
</comment>